<keyword id="KW-0028">Amino-acid biosynthesis</keyword>
<keyword id="KW-0100">Branched-chain amino acid biosynthesis</keyword>
<keyword id="KW-0460">Magnesium</keyword>
<keyword id="KW-0479">Metal-binding</keyword>
<keyword id="KW-0521">NADP</keyword>
<keyword id="KW-0560">Oxidoreductase</keyword>
<keyword id="KW-0677">Repeat</keyword>
<accession>A9R8G1</accession>
<sequence length="492" mass="53993">MANYFNTLNLRQQLAQLGKCRFMARDEFADEAGYLKGKKVVIVGCGAQGLNQGLNMRDSGLDVAYALRKEAIAEKRASWRKATENGFKVGTYEELIPQADLVVNLTPDKQHSAVVKAVQPLMKEGAALGYSHGFNIVEVGEQVRKDITVVMVAPKCPGTEVREEYKRGFGVPTLIAVHPENDPKGEGMAIAKAWAAATGGHRAGVLEFSFVAEVKSDLMGEQTILCGMLQAGSLLCFDKLVSEGTDAAYAEKLIQFGWETITEALKQGGITLMMDRLSNPAKLRAYALSEQLKEIMAPLFQKHMDDIISGAFSSGMMADWANDDVKLLNWREETGRTAFENAPQFEGKISEQEYFDHGVLMIAMVKAGVELAFETMVDSGIIEESAYYESLHELPLIANTIARKRLYEMNVVISDTAEYGNYLFANAAVPLLKEKFMDSLQAGDLGKSIPGSAVDNAQLRDVNEAIRNHPIEAVGHKLRGYMTDMKRIAVAG</sequence>
<organism>
    <name type="scientific">Yersinia pestis bv. Antiqua (strain Angola)</name>
    <dbReference type="NCBI Taxonomy" id="349746"/>
    <lineage>
        <taxon>Bacteria</taxon>
        <taxon>Pseudomonadati</taxon>
        <taxon>Pseudomonadota</taxon>
        <taxon>Gammaproteobacteria</taxon>
        <taxon>Enterobacterales</taxon>
        <taxon>Yersiniaceae</taxon>
        <taxon>Yersinia</taxon>
    </lineage>
</organism>
<proteinExistence type="inferred from homology"/>
<feature type="chain" id="PRO_1000191020" description="Ketol-acid reductoisomerase (NADP(+))">
    <location>
        <begin position="1"/>
        <end position="492"/>
    </location>
</feature>
<feature type="domain" description="KARI N-terminal Rossmann" evidence="2">
    <location>
        <begin position="15"/>
        <end position="208"/>
    </location>
</feature>
<feature type="domain" description="KARI C-terminal knotted 1" evidence="3">
    <location>
        <begin position="209"/>
        <end position="344"/>
    </location>
</feature>
<feature type="domain" description="KARI C-terminal knotted 2" evidence="3">
    <location>
        <begin position="345"/>
        <end position="485"/>
    </location>
</feature>
<feature type="active site" evidence="1">
    <location>
        <position position="132"/>
    </location>
</feature>
<feature type="binding site" evidence="1">
    <location>
        <begin position="45"/>
        <end position="48"/>
    </location>
    <ligand>
        <name>NADP(+)</name>
        <dbReference type="ChEBI" id="CHEBI:58349"/>
    </ligand>
</feature>
<feature type="binding site" evidence="1">
    <location>
        <position position="68"/>
    </location>
    <ligand>
        <name>NADP(+)</name>
        <dbReference type="ChEBI" id="CHEBI:58349"/>
    </ligand>
</feature>
<feature type="binding site" evidence="1">
    <location>
        <position position="76"/>
    </location>
    <ligand>
        <name>NADP(+)</name>
        <dbReference type="ChEBI" id="CHEBI:58349"/>
    </ligand>
</feature>
<feature type="binding site" evidence="1">
    <location>
        <position position="78"/>
    </location>
    <ligand>
        <name>NADP(+)</name>
        <dbReference type="ChEBI" id="CHEBI:58349"/>
    </ligand>
</feature>
<feature type="binding site" evidence="1">
    <location>
        <begin position="108"/>
        <end position="110"/>
    </location>
    <ligand>
        <name>NADP(+)</name>
        <dbReference type="ChEBI" id="CHEBI:58349"/>
    </ligand>
</feature>
<feature type="binding site" evidence="1">
    <location>
        <position position="158"/>
    </location>
    <ligand>
        <name>NADP(+)</name>
        <dbReference type="ChEBI" id="CHEBI:58349"/>
    </ligand>
</feature>
<feature type="binding site" evidence="1">
    <location>
        <position position="217"/>
    </location>
    <ligand>
        <name>Mg(2+)</name>
        <dbReference type="ChEBI" id="CHEBI:18420"/>
        <label>1</label>
    </ligand>
</feature>
<feature type="binding site" evidence="1">
    <location>
        <position position="217"/>
    </location>
    <ligand>
        <name>Mg(2+)</name>
        <dbReference type="ChEBI" id="CHEBI:18420"/>
        <label>2</label>
    </ligand>
</feature>
<feature type="binding site" evidence="1">
    <location>
        <position position="221"/>
    </location>
    <ligand>
        <name>Mg(2+)</name>
        <dbReference type="ChEBI" id="CHEBI:18420"/>
        <label>1</label>
    </ligand>
</feature>
<feature type="binding site" evidence="1">
    <location>
        <position position="389"/>
    </location>
    <ligand>
        <name>Mg(2+)</name>
        <dbReference type="ChEBI" id="CHEBI:18420"/>
        <label>2</label>
    </ligand>
</feature>
<feature type="binding site" evidence="1">
    <location>
        <position position="393"/>
    </location>
    <ligand>
        <name>Mg(2+)</name>
        <dbReference type="ChEBI" id="CHEBI:18420"/>
        <label>2</label>
    </ligand>
</feature>
<feature type="binding site" evidence="1">
    <location>
        <position position="414"/>
    </location>
    <ligand>
        <name>substrate</name>
    </ligand>
</feature>
<gene>
    <name evidence="1" type="primary">ilvC</name>
    <name type="ordered locus">YpAngola_A0493</name>
</gene>
<reference key="1">
    <citation type="journal article" date="2010" name="J. Bacteriol.">
        <title>Genome sequence of the deep-rooted Yersinia pestis strain Angola reveals new insights into the evolution and pangenome of the plague bacterium.</title>
        <authorList>
            <person name="Eppinger M."/>
            <person name="Worsham P.L."/>
            <person name="Nikolich M.P."/>
            <person name="Riley D.R."/>
            <person name="Sebastian Y."/>
            <person name="Mou S."/>
            <person name="Achtman M."/>
            <person name="Lindler L.E."/>
            <person name="Ravel J."/>
        </authorList>
    </citation>
    <scope>NUCLEOTIDE SEQUENCE [LARGE SCALE GENOMIC DNA]</scope>
    <source>
        <strain>Angola</strain>
    </source>
</reference>
<name>ILVC_YERPG</name>
<evidence type="ECO:0000255" key="1">
    <source>
        <dbReference type="HAMAP-Rule" id="MF_00435"/>
    </source>
</evidence>
<evidence type="ECO:0000255" key="2">
    <source>
        <dbReference type="PROSITE-ProRule" id="PRU01197"/>
    </source>
</evidence>
<evidence type="ECO:0000255" key="3">
    <source>
        <dbReference type="PROSITE-ProRule" id="PRU01198"/>
    </source>
</evidence>
<dbReference type="EC" id="1.1.1.86" evidence="1"/>
<dbReference type="EMBL" id="CP000901">
    <property type="protein sequence ID" value="ABX86272.1"/>
    <property type="molecule type" value="Genomic_DNA"/>
</dbReference>
<dbReference type="RefSeq" id="WP_002212007.1">
    <property type="nucleotide sequence ID" value="NZ_CP009935.1"/>
</dbReference>
<dbReference type="SMR" id="A9R8G1"/>
<dbReference type="GeneID" id="57974817"/>
<dbReference type="KEGG" id="ypg:YpAngola_A0493"/>
<dbReference type="PATRIC" id="fig|349746.12.peg.1442"/>
<dbReference type="UniPathway" id="UPA00047">
    <property type="reaction ID" value="UER00056"/>
</dbReference>
<dbReference type="UniPathway" id="UPA00049">
    <property type="reaction ID" value="UER00060"/>
</dbReference>
<dbReference type="GO" id="GO:0005829">
    <property type="term" value="C:cytosol"/>
    <property type="evidence" value="ECO:0007669"/>
    <property type="project" value="TreeGrafter"/>
</dbReference>
<dbReference type="GO" id="GO:0004455">
    <property type="term" value="F:ketol-acid reductoisomerase activity"/>
    <property type="evidence" value="ECO:0007669"/>
    <property type="project" value="UniProtKB-UniRule"/>
</dbReference>
<dbReference type="GO" id="GO:0000287">
    <property type="term" value="F:magnesium ion binding"/>
    <property type="evidence" value="ECO:0007669"/>
    <property type="project" value="UniProtKB-UniRule"/>
</dbReference>
<dbReference type="GO" id="GO:0009097">
    <property type="term" value="P:isoleucine biosynthetic process"/>
    <property type="evidence" value="ECO:0007669"/>
    <property type="project" value="UniProtKB-UniRule"/>
</dbReference>
<dbReference type="GO" id="GO:0009099">
    <property type="term" value="P:L-valine biosynthetic process"/>
    <property type="evidence" value="ECO:0007669"/>
    <property type="project" value="UniProtKB-UniRule"/>
</dbReference>
<dbReference type="FunFam" id="1.10.1040.10:FF:000007">
    <property type="entry name" value="Ketol-acid reductoisomerase (NADP(+))"/>
    <property type="match status" value="1"/>
</dbReference>
<dbReference type="FunFam" id="3.40.50.720:FF:000043">
    <property type="entry name" value="Ketol-acid reductoisomerase (NADP(+))"/>
    <property type="match status" value="1"/>
</dbReference>
<dbReference type="Gene3D" id="1.10.1040.10">
    <property type="entry name" value="N-(1-d-carboxylethyl)-l-norvaline Dehydrogenase, domain 2"/>
    <property type="match status" value="1"/>
</dbReference>
<dbReference type="Gene3D" id="3.40.50.720">
    <property type="entry name" value="NAD(P)-binding Rossmann-like Domain"/>
    <property type="match status" value="1"/>
</dbReference>
<dbReference type="HAMAP" id="MF_00435">
    <property type="entry name" value="IlvC"/>
    <property type="match status" value="1"/>
</dbReference>
<dbReference type="InterPro" id="IPR008927">
    <property type="entry name" value="6-PGluconate_DH-like_C_sf"/>
</dbReference>
<dbReference type="InterPro" id="IPR013328">
    <property type="entry name" value="6PGD_dom2"/>
</dbReference>
<dbReference type="InterPro" id="IPR013023">
    <property type="entry name" value="KARI"/>
</dbReference>
<dbReference type="InterPro" id="IPR000506">
    <property type="entry name" value="KARI_C"/>
</dbReference>
<dbReference type="InterPro" id="IPR013116">
    <property type="entry name" value="KARI_N"/>
</dbReference>
<dbReference type="InterPro" id="IPR036291">
    <property type="entry name" value="NAD(P)-bd_dom_sf"/>
</dbReference>
<dbReference type="NCBIfam" id="TIGR00465">
    <property type="entry name" value="ilvC"/>
    <property type="match status" value="1"/>
</dbReference>
<dbReference type="NCBIfam" id="NF003557">
    <property type="entry name" value="PRK05225.1"/>
    <property type="match status" value="1"/>
</dbReference>
<dbReference type="PANTHER" id="PTHR21371">
    <property type="entry name" value="KETOL-ACID REDUCTOISOMERASE, MITOCHONDRIAL"/>
    <property type="match status" value="1"/>
</dbReference>
<dbReference type="PANTHER" id="PTHR21371:SF1">
    <property type="entry name" value="KETOL-ACID REDUCTOISOMERASE, MITOCHONDRIAL"/>
    <property type="match status" value="1"/>
</dbReference>
<dbReference type="Pfam" id="PF01450">
    <property type="entry name" value="KARI_C"/>
    <property type="match status" value="2"/>
</dbReference>
<dbReference type="Pfam" id="PF07991">
    <property type="entry name" value="KARI_N"/>
    <property type="match status" value="1"/>
</dbReference>
<dbReference type="SUPFAM" id="SSF48179">
    <property type="entry name" value="6-phosphogluconate dehydrogenase C-terminal domain-like"/>
    <property type="match status" value="2"/>
</dbReference>
<dbReference type="SUPFAM" id="SSF51735">
    <property type="entry name" value="NAD(P)-binding Rossmann-fold domains"/>
    <property type="match status" value="1"/>
</dbReference>
<dbReference type="PROSITE" id="PS51851">
    <property type="entry name" value="KARI_C"/>
    <property type="match status" value="2"/>
</dbReference>
<dbReference type="PROSITE" id="PS51850">
    <property type="entry name" value="KARI_N"/>
    <property type="match status" value="1"/>
</dbReference>
<protein>
    <recommendedName>
        <fullName evidence="1">Ketol-acid reductoisomerase (NADP(+))</fullName>
        <shortName evidence="1">KARI</shortName>
        <ecNumber evidence="1">1.1.1.86</ecNumber>
    </recommendedName>
    <alternativeName>
        <fullName evidence="1">Acetohydroxy-acid isomeroreductase</fullName>
        <shortName evidence="1">AHIR</shortName>
    </alternativeName>
    <alternativeName>
        <fullName evidence="1">Alpha-keto-beta-hydroxylacyl reductoisomerase</fullName>
    </alternativeName>
    <alternativeName>
        <fullName evidence="1">Ketol-acid reductoisomerase type 2</fullName>
    </alternativeName>
    <alternativeName>
        <fullName evidence="1">Ketol-acid reductoisomerase type II</fullName>
    </alternativeName>
</protein>
<comment type="function">
    <text evidence="1">Involved in the biosynthesis of branched-chain amino acids (BCAA). Catalyzes an alkyl-migration followed by a ketol-acid reduction of (S)-2-acetolactate (S2AL) to yield (R)-2,3-dihydroxy-isovalerate. In the isomerase reaction, S2AL is rearranged via a Mg-dependent methyl migration to produce 3-hydroxy-3-methyl-2-ketobutyrate (HMKB). In the reductase reaction, this 2-ketoacid undergoes a metal-dependent reduction by NADPH to yield (R)-2,3-dihydroxy-isovalerate.</text>
</comment>
<comment type="catalytic activity">
    <reaction evidence="1">
        <text>(2R)-2,3-dihydroxy-3-methylbutanoate + NADP(+) = (2S)-2-acetolactate + NADPH + H(+)</text>
        <dbReference type="Rhea" id="RHEA:22068"/>
        <dbReference type="ChEBI" id="CHEBI:15378"/>
        <dbReference type="ChEBI" id="CHEBI:49072"/>
        <dbReference type="ChEBI" id="CHEBI:57783"/>
        <dbReference type="ChEBI" id="CHEBI:58349"/>
        <dbReference type="ChEBI" id="CHEBI:58476"/>
        <dbReference type="EC" id="1.1.1.86"/>
    </reaction>
</comment>
<comment type="catalytic activity">
    <reaction evidence="1">
        <text>(2R,3R)-2,3-dihydroxy-3-methylpentanoate + NADP(+) = (S)-2-ethyl-2-hydroxy-3-oxobutanoate + NADPH + H(+)</text>
        <dbReference type="Rhea" id="RHEA:13493"/>
        <dbReference type="ChEBI" id="CHEBI:15378"/>
        <dbReference type="ChEBI" id="CHEBI:49256"/>
        <dbReference type="ChEBI" id="CHEBI:49258"/>
        <dbReference type="ChEBI" id="CHEBI:57783"/>
        <dbReference type="ChEBI" id="CHEBI:58349"/>
        <dbReference type="EC" id="1.1.1.86"/>
    </reaction>
</comment>
<comment type="cofactor">
    <cofactor evidence="1">
        <name>Mg(2+)</name>
        <dbReference type="ChEBI" id="CHEBI:18420"/>
    </cofactor>
    <text evidence="1">Binds 2 magnesium ions per subunit.</text>
</comment>
<comment type="pathway">
    <text evidence="1">Amino-acid biosynthesis; L-isoleucine biosynthesis; L-isoleucine from 2-oxobutanoate: step 2/4.</text>
</comment>
<comment type="pathway">
    <text evidence="1">Amino-acid biosynthesis; L-valine biosynthesis; L-valine from pyruvate: step 2/4.</text>
</comment>
<comment type="similarity">
    <text evidence="1">Belongs to the ketol-acid reductoisomerase family.</text>
</comment>